<comment type="function">
    <text evidence="1">Hydrolyzes ureidoacrylate to form aminoacrylate and carbamate. The carbamate hydrolyzes spontaneously, thereby releasing one of the nitrogen atoms of the pyrimidine ring as ammonia and one of its carbon atoms as CO2.</text>
</comment>
<comment type="catalytic activity">
    <reaction evidence="1">
        <text>(Z)-3-ureidoacrylate + H2O + H(+) = (Z)-3-aminoacrylate + NH4(+) + CO2</text>
        <dbReference type="Rhea" id="RHEA:42624"/>
        <dbReference type="ChEBI" id="CHEBI:15377"/>
        <dbReference type="ChEBI" id="CHEBI:15378"/>
        <dbReference type="ChEBI" id="CHEBI:16526"/>
        <dbReference type="ChEBI" id="CHEBI:28938"/>
        <dbReference type="ChEBI" id="CHEBI:59891"/>
        <dbReference type="ChEBI" id="CHEBI:59894"/>
        <dbReference type="EC" id="3.5.1.110"/>
    </reaction>
</comment>
<comment type="catalytic activity">
    <reaction evidence="1">
        <text>(Z)-3-ureidoacrylate + H2O = (Z)-3-aminoacrylate + carbamate + H(+)</text>
        <dbReference type="Rhea" id="RHEA:31603"/>
        <dbReference type="ChEBI" id="CHEBI:13941"/>
        <dbReference type="ChEBI" id="CHEBI:15377"/>
        <dbReference type="ChEBI" id="CHEBI:15378"/>
        <dbReference type="ChEBI" id="CHEBI:59891"/>
        <dbReference type="ChEBI" id="CHEBI:59894"/>
    </reaction>
</comment>
<comment type="catalytic activity">
    <reaction evidence="1">
        <text>(Z)-2-methylureidoacrylate + H2O + H(+) = (Z)-2-methylaminoacrylate + NH4(+) + CO2</text>
        <dbReference type="Rhea" id="RHEA:42620"/>
        <dbReference type="ChEBI" id="CHEBI:15377"/>
        <dbReference type="ChEBI" id="CHEBI:15378"/>
        <dbReference type="ChEBI" id="CHEBI:16526"/>
        <dbReference type="ChEBI" id="CHEBI:28938"/>
        <dbReference type="ChEBI" id="CHEBI:143783"/>
        <dbReference type="ChEBI" id="CHEBI:145735"/>
        <dbReference type="EC" id="3.5.1.110"/>
    </reaction>
</comment>
<comment type="similarity">
    <text evidence="1">Belongs to the isochorismatase family. RutB subfamily.</text>
</comment>
<evidence type="ECO:0000255" key="1">
    <source>
        <dbReference type="HAMAP-Rule" id="MF_00830"/>
    </source>
</evidence>
<keyword id="KW-0378">Hydrolase</keyword>
<dbReference type="EC" id="3.5.1.110" evidence="1"/>
<dbReference type="EMBL" id="CP001891">
    <property type="protein sequence ID" value="ADC59222.1"/>
    <property type="molecule type" value="Genomic_DNA"/>
</dbReference>
<dbReference type="RefSeq" id="WP_008805941.1">
    <property type="nucleotide sequence ID" value="NC_013850.1"/>
</dbReference>
<dbReference type="SMR" id="D3RKL1"/>
<dbReference type="GeneID" id="93274033"/>
<dbReference type="KEGG" id="kva:Kvar_3342"/>
<dbReference type="HOGENOM" id="CLU_068979_8_0_6"/>
<dbReference type="GO" id="GO:0016811">
    <property type="term" value="F:hydrolase activity, acting on carbon-nitrogen (but not peptide) bonds, in linear amides"/>
    <property type="evidence" value="ECO:0007669"/>
    <property type="project" value="UniProtKB-UniRule"/>
</dbReference>
<dbReference type="GO" id="GO:0019740">
    <property type="term" value="P:nitrogen utilization"/>
    <property type="evidence" value="ECO:0007669"/>
    <property type="project" value="UniProtKB-UniRule"/>
</dbReference>
<dbReference type="GO" id="GO:0006212">
    <property type="term" value="P:uracil catabolic process"/>
    <property type="evidence" value="ECO:0007669"/>
    <property type="project" value="UniProtKB-UniRule"/>
</dbReference>
<dbReference type="CDD" id="cd00431">
    <property type="entry name" value="cysteine_hydrolases"/>
    <property type="match status" value="1"/>
</dbReference>
<dbReference type="Gene3D" id="3.40.50.850">
    <property type="entry name" value="Isochorismatase-like"/>
    <property type="match status" value="1"/>
</dbReference>
<dbReference type="HAMAP" id="MF_00830">
    <property type="entry name" value="RutB"/>
    <property type="match status" value="1"/>
</dbReference>
<dbReference type="InterPro" id="IPR000868">
    <property type="entry name" value="Isochorismatase-like_dom"/>
</dbReference>
<dbReference type="InterPro" id="IPR050272">
    <property type="entry name" value="Isochorismatase-like_hydrls"/>
</dbReference>
<dbReference type="InterPro" id="IPR036380">
    <property type="entry name" value="Isochorismatase-like_sf"/>
</dbReference>
<dbReference type="InterPro" id="IPR019916">
    <property type="entry name" value="RutB"/>
</dbReference>
<dbReference type="NCBIfam" id="TIGR03614">
    <property type="entry name" value="RutB"/>
    <property type="match status" value="1"/>
</dbReference>
<dbReference type="PANTHER" id="PTHR43540:SF6">
    <property type="entry name" value="ISOCHORISMATASE-LIKE DOMAIN-CONTAINING PROTEIN"/>
    <property type="match status" value="1"/>
</dbReference>
<dbReference type="PANTHER" id="PTHR43540">
    <property type="entry name" value="PEROXYUREIDOACRYLATE/UREIDOACRYLATE AMIDOHYDROLASE-RELATED"/>
    <property type="match status" value="1"/>
</dbReference>
<dbReference type="Pfam" id="PF00857">
    <property type="entry name" value="Isochorismatase"/>
    <property type="match status" value="1"/>
</dbReference>
<dbReference type="SUPFAM" id="SSF52499">
    <property type="entry name" value="Isochorismatase-like hydrolases"/>
    <property type="match status" value="1"/>
</dbReference>
<feature type="chain" id="PRO_0000402690" description="Ureidoacrylate amidohydrolase RutB">
    <location>
        <begin position="1"/>
        <end position="236"/>
    </location>
</feature>
<feature type="active site" description="Proton acceptor" evidence="1">
    <location>
        <position position="24"/>
    </location>
</feature>
<feature type="active site" evidence="1">
    <location>
        <position position="133"/>
    </location>
</feature>
<feature type="active site" description="Nucleophile" evidence="1">
    <location>
        <position position="166"/>
    </location>
</feature>
<reference key="1">
    <citation type="submission" date="2010-02" db="EMBL/GenBank/DDBJ databases">
        <title>Complete sequence of Klebsiella variicola At-22.</title>
        <authorList>
            <consortium name="US DOE Joint Genome Institute"/>
            <person name="Lucas S."/>
            <person name="Copeland A."/>
            <person name="Lapidus A."/>
            <person name="Cheng J.-F."/>
            <person name="Bruce D."/>
            <person name="Goodwin L."/>
            <person name="Pitluck S."/>
            <person name="Davenport K."/>
            <person name="Brettin T."/>
            <person name="Detter J.C."/>
            <person name="Han C."/>
            <person name="Tapia R."/>
            <person name="Larimer F."/>
            <person name="Land M."/>
            <person name="Hauser L."/>
            <person name="Kyrpides N."/>
            <person name="Ivanova N."/>
            <person name="Pinto A."/>
            <person name="Currie C."/>
            <person name="Woyke T."/>
        </authorList>
    </citation>
    <scope>NUCLEOTIDE SEQUENCE [LARGE SCALE GENOMIC DNA]</scope>
    <source>
        <strain>At-22</strain>
    </source>
</reference>
<proteinExistence type="inferred from homology"/>
<accession>D3RKL1</accession>
<sequence>MITLPARPESLTFAPQQSALIVVDMQNAYASQGGYLDLAGFDVSATRPVIDNINTAVAAARAAGMLIIWFQNGWDDQYVEAGGPGSPNYHKSNALKTMRQRPELQGKLLAKGGWDYQLVDELTPQEGDIVLPKPRYSGFFNTPLDSILRSRGIRHLVFTGIATNVCVESTLRDGFFLEYFGIVLEDATHQAGPAFAQQAALFNIETFFGWVSDVESFCHALSPATPLSLAKEKRYA</sequence>
<protein>
    <recommendedName>
        <fullName evidence="1">Ureidoacrylate amidohydrolase RutB</fullName>
        <ecNumber evidence="1">3.5.1.110</ecNumber>
    </recommendedName>
</protein>
<gene>
    <name evidence="1" type="primary">rutB</name>
    <name type="ordered locus">Kvar_3342</name>
</gene>
<name>RUTB_KLEVT</name>
<organism>
    <name type="scientific">Klebsiella variicola (strain At-22)</name>
    <dbReference type="NCBI Taxonomy" id="640131"/>
    <lineage>
        <taxon>Bacteria</taxon>
        <taxon>Pseudomonadati</taxon>
        <taxon>Pseudomonadota</taxon>
        <taxon>Gammaproteobacteria</taxon>
        <taxon>Enterobacterales</taxon>
        <taxon>Enterobacteriaceae</taxon>
        <taxon>Klebsiella/Raoultella group</taxon>
        <taxon>Klebsiella</taxon>
        <taxon>Klebsiella pneumoniae complex</taxon>
    </lineage>
</organism>